<comment type="catalytic activity">
    <reaction>
        <text>a myo-inositol phosphate + H2O = myo-inositol + phosphate</text>
        <dbReference type="Rhea" id="RHEA:24056"/>
        <dbReference type="ChEBI" id="CHEBI:15377"/>
        <dbReference type="ChEBI" id="CHEBI:17268"/>
        <dbReference type="ChEBI" id="CHEBI:43474"/>
        <dbReference type="ChEBI" id="CHEBI:84139"/>
        <dbReference type="EC" id="3.1.3.25"/>
    </reaction>
</comment>
<comment type="cofactor">
    <cofactor evidence="1">
        <name>Mg(2+)</name>
        <dbReference type="ChEBI" id="CHEBI:18420"/>
    </cofactor>
</comment>
<comment type="pathway">
    <text>Polyol metabolism; myo-inositol biosynthesis; myo-inositol from D-glucose 6-phosphate: step 2/2.</text>
</comment>
<comment type="subcellular location">
    <subcellularLocation>
        <location evidence="3">Membrane</location>
        <topology evidence="3">Single-pass membrane protein</topology>
    </subcellularLocation>
</comment>
<comment type="similarity">
    <text evidence="3">Belongs to the inositol monophosphatase superfamily.</text>
</comment>
<organism>
    <name type="scientific">Xenopus tropicalis</name>
    <name type="common">Western clawed frog</name>
    <name type="synonym">Silurana tropicalis</name>
    <dbReference type="NCBI Taxonomy" id="8364"/>
    <lineage>
        <taxon>Eukaryota</taxon>
        <taxon>Metazoa</taxon>
        <taxon>Chordata</taxon>
        <taxon>Craniata</taxon>
        <taxon>Vertebrata</taxon>
        <taxon>Euteleostomi</taxon>
        <taxon>Amphibia</taxon>
        <taxon>Batrachia</taxon>
        <taxon>Anura</taxon>
        <taxon>Pipoidea</taxon>
        <taxon>Pipidae</taxon>
        <taxon>Xenopodinae</taxon>
        <taxon>Xenopus</taxon>
        <taxon>Silurana</taxon>
    </lineage>
</organism>
<sequence length="356" mass="38720">MAPMGIRLSPLGIGVFCLLGLGVLYHVYSGFLTGKFSAFLLGDRAEDPGPGEDTVDLRELLAVSVRAAELGGLEVKKVRESNSLNEKAKGKTMEGADDKMTSGDVLSNKKMYHLIKNAFPALKVNTEEKVEADDEDAVSWDRNIPDDIKEQIKTKHVASESITMWIDPLDATQEYTENLVNYVTTMVCVAVNGKPVIGVIHKPFTGFTAWAMLDGGSSIKKRNSYNEKTPTFIVSRSHSGEVKEVTRQTFGNKTEIISAGGAGYKVLSLLDVTDDKQETADVYIHVTYIKKWDICAGNAILNALGGQMTTLKGEEIMYTGSELNKGGLLASIGMDHGVLVEKLSEKLQVNAKKPAK</sequence>
<reference key="1">
    <citation type="submission" date="2006-10" db="EMBL/GenBank/DDBJ databases">
        <authorList>
            <consortium name="Sanger Xenopus tropicalis EST/cDNA project"/>
        </authorList>
    </citation>
    <scope>NUCLEOTIDE SEQUENCE [LARGE SCALE MRNA]</scope>
    <source>
        <tissue>Egg</tissue>
    </source>
</reference>
<reference key="2">
    <citation type="submission" date="2004-08" db="EMBL/GenBank/DDBJ databases">
        <authorList>
            <consortium name="NIH - Xenopus Gene Collection (XGC) project"/>
        </authorList>
    </citation>
    <scope>NUCLEOTIDE SEQUENCE [LARGE SCALE MRNA]</scope>
    <source>
        <tissue>Embryo</tissue>
    </source>
</reference>
<protein>
    <recommendedName>
        <fullName>Inositol monophosphatase 3</fullName>
        <shortName>IMP 3</shortName>
        <shortName>IMPase 3</shortName>
        <ecNumber>3.1.3.25</ecNumber>
    </recommendedName>
    <alternativeName>
        <fullName>3'(2'), 5'-bisphosphate nucleotidase 2</fullName>
    </alternativeName>
    <alternativeName>
        <fullName>Inositol monophosphatase domain-containing protein 1</fullName>
    </alternativeName>
    <alternativeName>
        <fullName>Inositol-1(or 4)-monophosphatase 3</fullName>
    </alternativeName>
    <alternativeName>
        <fullName>Myo-inositol monophosphatase A3</fullName>
    </alternativeName>
</protein>
<dbReference type="EC" id="3.1.3.25"/>
<dbReference type="EMBL" id="CR926321">
    <property type="protein sequence ID" value="CAJ82287.1"/>
    <property type="molecule type" value="mRNA"/>
</dbReference>
<dbReference type="EMBL" id="BC080464">
    <property type="protein sequence ID" value="AAH80464.1"/>
    <property type="molecule type" value="mRNA"/>
</dbReference>
<dbReference type="RefSeq" id="NP_001016215.2">
    <property type="nucleotide sequence ID" value="NM_001016215.3"/>
</dbReference>
<dbReference type="SMR" id="Q28CL4"/>
<dbReference type="FunCoup" id="Q28CL4">
    <property type="interactions" value="2363"/>
</dbReference>
<dbReference type="STRING" id="8364.ENSXETP00000040823"/>
<dbReference type="PaxDb" id="8364-ENSXETP00000012482"/>
<dbReference type="DNASU" id="548969"/>
<dbReference type="GeneID" id="548969"/>
<dbReference type="KEGG" id="xtr:548969"/>
<dbReference type="AGR" id="Xenbase:XB-GENE-5751033"/>
<dbReference type="CTD" id="54928"/>
<dbReference type="Xenbase" id="XB-GENE-5751033">
    <property type="gene designation" value="bpnt2"/>
</dbReference>
<dbReference type="eggNOG" id="KOG3853">
    <property type="taxonomic scope" value="Eukaryota"/>
</dbReference>
<dbReference type="InParanoid" id="Q28CL4"/>
<dbReference type="OrthoDB" id="74460at2759"/>
<dbReference type="Reactome" id="R-XTR-156584">
    <property type="pathway name" value="Cytosolic sulfonation of small molecules"/>
</dbReference>
<dbReference type="UniPathway" id="UPA00823">
    <property type="reaction ID" value="UER00788"/>
</dbReference>
<dbReference type="Proteomes" id="UP000008143">
    <property type="component" value="Chromosome 6"/>
</dbReference>
<dbReference type="Bgee" id="ENSXETG00000005659">
    <property type="expression patterns" value="Expressed in skeletal muscle tissue and 14 other cell types or tissues"/>
</dbReference>
<dbReference type="ExpressionAtlas" id="Q28CL4">
    <property type="expression patterns" value="baseline"/>
</dbReference>
<dbReference type="GO" id="GO:0016020">
    <property type="term" value="C:membrane"/>
    <property type="evidence" value="ECO:0007669"/>
    <property type="project" value="UniProtKB-SubCell"/>
</dbReference>
<dbReference type="GO" id="GO:0052834">
    <property type="term" value="F:inositol monophosphate phosphatase activity"/>
    <property type="evidence" value="ECO:0007669"/>
    <property type="project" value="UniProtKB-EC"/>
</dbReference>
<dbReference type="GO" id="GO:0046872">
    <property type="term" value="F:metal ion binding"/>
    <property type="evidence" value="ECO:0007669"/>
    <property type="project" value="UniProtKB-KW"/>
</dbReference>
<dbReference type="GO" id="GO:0006021">
    <property type="term" value="P:inositol biosynthetic process"/>
    <property type="evidence" value="ECO:0007669"/>
    <property type="project" value="UniProtKB-UniPathway"/>
</dbReference>
<dbReference type="GO" id="GO:0046854">
    <property type="term" value="P:phosphatidylinositol phosphate biosynthetic process"/>
    <property type="evidence" value="ECO:0007669"/>
    <property type="project" value="InterPro"/>
</dbReference>
<dbReference type="CDD" id="cd01640">
    <property type="entry name" value="IPPase"/>
    <property type="match status" value="1"/>
</dbReference>
<dbReference type="FunFam" id="3.30.540.10:FF:000012">
    <property type="entry name" value="Blast:Putative inositol monophosphatase 3"/>
    <property type="match status" value="1"/>
</dbReference>
<dbReference type="FunFam" id="3.40.190.80:FF:000007">
    <property type="entry name" value="Blast:Putative inositol monophosphatase 3"/>
    <property type="match status" value="1"/>
</dbReference>
<dbReference type="Gene3D" id="3.40.190.80">
    <property type="match status" value="1"/>
</dbReference>
<dbReference type="Gene3D" id="3.30.540.10">
    <property type="entry name" value="Fructose-1,6-Bisphosphatase, subunit A, domain 1"/>
    <property type="match status" value="1"/>
</dbReference>
<dbReference type="InterPro" id="IPR050725">
    <property type="entry name" value="CysQ/Inositol_MonoPase"/>
</dbReference>
<dbReference type="InterPro" id="IPR000760">
    <property type="entry name" value="Inositol_monophosphatase-like"/>
</dbReference>
<dbReference type="InterPro" id="IPR020550">
    <property type="entry name" value="Inositol_monophosphatase_CS"/>
</dbReference>
<dbReference type="PANTHER" id="PTHR43028">
    <property type="entry name" value="3'(2'),5'-BISPHOSPHATE NUCLEOTIDASE 1"/>
    <property type="match status" value="1"/>
</dbReference>
<dbReference type="PANTHER" id="PTHR43028:SF4">
    <property type="entry name" value="INOSITOL MONOPHOSPHATASE 3"/>
    <property type="match status" value="1"/>
</dbReference>
<dbReference type="Pfam" id="PF00459">
    <property type="entry name" value="Inositol_P"/>
    <property type="match status" value="1"/>
</dbReference>
<dbReference type="SUPFAM" id="SSF56655">
    <property type="entry name" value="Carbohydrate phosphatase"/>
    <property type="match status" value="1"/>
</dbReference>
<dbReference type="PROSITE" id="PS00630">
    <property type="entry name" value="IMP_2"/>
    <property type="match status" value="1"/>
</dbReference>
<evidence type="ECO:0000250" key="1"/>
<evidence type="ECO:0000255" key="2"/>
<evidence type="ECO:0000305" key="3"/>
<feature type="chain" id="PRO_0000289045" description="Inositol monophosphatase 3">
    <location>
        <begin position="1"/>
        <end position="356"/>
    </location>
</feature>
<feature type="transmembrane region" description="Helical" evidence="2">
    <location>
        <begin position="11"/>
        <end position="31"/>
    </location>
</feature>
<feature type="binding site" evidence="1">
    <location>
        <position position="127"/>
    </location>
    <ligand>
        <name>Mg(2+)</name>
        <dbReference type="ChEBI" id="CHEBI:18420"/>
        <label>1</label>
    </ligand>
</feature>
<feature type="binding site" evidence="1">
    <location>
        <position position="127"/>
    </location>
    <ligand>
        <name>substrate</name>
    </ligand>
</feature>
<feature type="binding site" evidence="1">
    <location>
        <position position="167"/>
    </location>
    <ligand>
        <name>Mg(2+)</name>
        <dbReference type="ChEBI" id="CHEBI:18420"/>
        <label>1</label>
    </ligand>
</feature>
<feature type="binding site" evidence="1">
    <location>
        <position position="167"/>
    </location>
    <ligand>
        <name>Mg(2+)</name>
        <dbReference type="ChEBI" id="CHEBI:18420"/>
        <label>2</label>
    </ligand>
</feature>
<feature type="binding site" evidence="1">
    <location>
        <begin position="169"/>
        <end position="172"/>
    </location>
    <ligand>
        <name>substrate</name>
    </ligand>
</feature>
<feature type="binding site" evidence="1">
    <location>
        <position position="169"/>
    </location>
    <ligand>
        <name>Mg(2+)</name>
        <dbReference type="ChEBI" id="CHEBI:18420"/>
        <label>1</label>
    </ligand>
</feature>
<feature type="binding site" evidence="1">
    <location>
        <position position="170"/>
    </location>
    <ligand>
        <name>Mg(2+)</name>
        <dbReference type="ChEBI" id="CHEBI:18420"/>
        <label>2</label>
    </ligand>
</feature>
<feature type="binding site" evidence="1">
    <location>
        <position position="293"/>
    </location>
    <ligand>
        <name>Mg(2+)</name>
        <dbReference type="ChEBI" id="CHEBI:18420"/>
        <label>2</label>
    </ligand>
</feature>
<feature type="binding site" evidence="1">
    <location>
        <position position="293"/>
    </location>
    <ligand>
        <name>substrate</name>
    </ligand>
</feature>
<feature type="sequence conflict" description="In Ref. 2; AAH80464." evidence="3" ref="2">
    <original>S</original>
    <variation>A</variation>
    <location>
        <position position="344"/>
    </location>
</feature>
<gene>
    <name type="primary">bpnt2</name>
    <name type="synonym">impa3</name>
    <name type="synonym">impad1</name>
    <name type="ORF">TEgg066b01.1</name>
</gene>
<keyword id="KW-0378">Hydrolase</keyword>
<keyword id="KW-0460">Magnesium</keyword>
<keyword id="KW-0472">Membrane</keyword>
<keyword id="KW-0479">Metal-binding</keyword>
<keyword id="KW-1185">Reference proteome</keyword>
<keyword id="KW-0812">Transmembrane</keyword>
<keyword id="KW-1133">Transmembrane helix</keyword>
<name>IMPA3_XENTR</name>
<accession>Q28CL4</accession>
<accession>Q0VGW1</accession>
<proteinExistence type="evidence at transcript level"/>